<protein>
    <recommendedName>
        <fullName>Taste receptor type 2 member 1</fullName>
        <shortName>T2R1</shortName>
    </recommendedName>
</protein>
<reference key="1">
    <citation type="submission" date="2002-08" db="EMBL/GenBank/DDBJ databases">
        <title>Cloning of monkey taste receptor T2R1.</title>
        <authorList>
            <person name="Tanaka K."/>
            <person name="Ueda T."/>
            <person name="Ugawa S."/>
            <person name="Kajita K."/>
            <person name="Shimada S."/>
        </authorList>
    </citation>
    <scope>NUCLEOTIDE SEQUENCE [GENOMIC DNA]</scope>
</reference>
<gene>
    <name type="primary">TAS2R1</name>
</gene>
<feature type="chain" id="PRO_0000082186" description="Taste receptor type 2 member 1">
    <location>
        <begin position="1"/>
        <end position="299"/>
    </location>
</feature>
<feature type="topological domain" description="Extracellular" evidence="2">
    <location>
        <begin position="1"/>
        <end position="9"/>
    </location>
</feature>
<feature type="transmembrane region" description="Helical; Name=1" evidence="2">
    <location>
        <begin position="10"/>
        <end position="30"/>
    </location>
</feature>
<feature type="topological domain" description="Cytoplasmic" evidence="2">
    <location>
        <begin position="31"/>
        <end position="55"/>
    </location>
</feature>
<feature type="transmembrane region" description="Helical; Name=2" evidence="2">
    <location>
        <begin position="56"/>
        <end position="76"/>
    </location>
</feature>
<feature type="topological domain" description="Extracellular" evidence="2">
    <location>
        <begin position="77"/>
        <end position="81"/>
    </location>
</feature>
<feature type="transmembrane region" description="Helical; Name=3" evidence="2">
    <location>
        <begin position="82"/>
        <end position="102"/>
    </location>
</feature>
<feature type="topological domain" description="Cytoplasmic" evidence="2">
    <location>
        <begin position="103"/>
        <end position="124"/>
    </location>
</feature>
<feature type="transmembrane region" description="Helical; Name=4" evidence="2">
    <location>
        <begin position="125"/>
        <end position="145"/>
    </location>
</feature>
<feature type="topological domain" description="Extracellular" evidence="2">
    <location>
        <begin position="146"/>
        <end position="178"/>
    </location>
</feature>
<feature type="transmembrane region" description="Helical; Name=5" evidence="2">
    <location>
        <begin position="179"/>
        <end position="199"/>
    </location>
</feature>
<feature type="topological domain" description="Cytoplasmic" evidence="2">
    <location>
        <begin position="200"/>
        <end position="222"/>
    </location>
</feature>
<feature type="transmembrane region" description="Helical; Name=6" evidence="2">
    <location>
        <begin position="223"/>
        <end position="243"/>
    </location>
</feature>
<feature type="topological domain" description="Extracellular" evidence="2">
    <location>
        <begin position="244"/>
        <end position="257"/>
    </location>
</feature>
<feature type="transmembrane region" description="Helical; Name=7" evidence="2">
    <location>
        <begin position="258"/>
        <end position="278"/>
    </location>
</feature>
<feature type="topological domain" description="Cytoplasmic" evidence="2">
    <location>
        <begin position="279"/>
        <end position="299"/>
    </location>
</feature>
<feature type="glycosylation site" description="N-linked (GlcNAc...) asparagine" evidence="2">
    <location>
        <position position="163"/>
    </location>
</feature>
<evidence type="ECO:0000250" key="1"/>
<evidence type="ECO:0000255" key="2"/>
<evidence type="ECO:0000305" key="3"/>
<name>TA2R1_CHLAE</name>
<organism>
    <name type="scientific">Chlorocebus aethiops</name>
    <name type="common">Green monkey</name>
    <name type="synonym">Cercopithecus aethiops</name>
    <dbReference type="NCBI Taxonomy" id="9534"/>
    <lineage>
        <taxon>Eukaryota</taxon>
        <taxon>Metazoa</taxon>
        <taxon>Chordata</taxon>
        <taxon>Craniata</taxon>
        <taxon>Vertebrata</taxon>
        <taxon>Euteleostomi</taxon>
        <taxon>Mammalia</taxon>
        <taxon>Eutheria</taxon>
        <taxon>Euarchontoglires</taxon>
        <taxon>Primates</taxon>
        <taxon>Haplorrhini</taxon>
        <taxon>Catarrhini</taxon>
        <taxon>Cercopithecidae</taxon>
        <taxon>Cercopithecinae</taxon>
        <taxon>Chlorocebus</taxon>
    </lineage>
</organism>
<comment type="function">
    <text evidence="1">Receptor that may play a role in the perception of bitterness and is gustducin-linked. May play a role in sensing the chemical composition of the gastrointestinal content. The activity of this receptor may stimulate alpha gustducin, mediate PLC-beta-2 activation and lead to the gating of TRPM5 (By similarity).</text>
</comment>
<comment type="subcellular location">
    <subcellularLocation>
        <location>Membrane</location>
        <topology>Multi-pass membrane protein</topology>
    </subcellularLocation>
</comment>
<comment type="miscellaneous">
    <text>Most taste cells may be activated by a limited number of bitter compounds; individual taste cells can discriminate among bitter stimuli.</text>
</comment>
<comment type="similarity">
    <text evidence="3">Belongs to the G-protein coupled receptor T2R family.</text>
</comment>
<keyword id="KW-0297">G-protein coupled receptor</keyword>
<keyword id="KW-0325">Glycoprotein</keyword>
<keyword id="KW-0472">Membrane</keyword>
<keyword id="KW-0675">Receptor</keyword>
<keyword id="KW-0716">Sensory transduction</keyword>
<keyword id="KW-0919">Taste</keyword>
<keyword id="KW-0807">Transducer</keyword>
<keyword id="KW-0812">Transmembrane</keyword>
<keyword id="KW-1133">Transmembrane helix</keyword>
<dbReference type="EMBL" id="AB089344">
    <property type="protein sequence ID" value="BAC07254.1"/>
    <property type="molecule type" value="Genomic_DNA"/>
</dbReference>
<dbReference type="SMR" id="Q8MJU6"/>
<dbReference type="GlyCosmos" id="Q8MJU6">
    <property type="glycosylation" value="1 site, No reported glycans"/>
</dbReference>
<dbReference type="GO" id="GO:0005886">
    <property type="term" value="C:plasma membrane"/>
    <property type="evidence" value="ECO:0007669"/>
    <property type="project" value="UniProtKB-ARBA"/>
</dbReference>
<dbReference type="GO" id="GO:0033038">
    <property type="term" value="F:bitter taste receptor activity"/>
    <property type="evidence" value="ECO:0007669"/>
    <property type="project" value="InterPro"/>
</dbReference>
<dbReference type="GO" id="GO:0004930">
    <property type="term" value="F:G protein-coupled receptor activity"/>
    <property type="evidence" value="ECO:0007669"/>
    <property type="project" value="UniProtKB-KW"/>
</dbReference>
<dbReference type="CDD" id="cd15016">
    <property type="entry name" value="7tm_TAS2R1"/>
    <property type="match status" value="1"/>
</dbReference>
<dbReference type="FunFam" id="1.20.1070.10:FF:000055">
    <property type="entry name" value="Taste receptor type 2"/>
    <property type="match status" value="1"/>
</dbReference>
<dbReference type="Gene3D" id="1.20.1070.10">
    <property type="entry name" value="Rhodopsin 7-helix transmembrane proteins"/>
    <property type="match status" value="1"/>
</dbReference>
<dbReference type="InterPro" id="IPR007960">
    <property type="entry name" value="TAS2R"/>
</dbReference>
<dbReference type="PANTHER" id="PTHR11394">
    <property type="entry name" value="TASTE RECEPTOR TYPE 2"/>
    <property type="match status" value="1"/>
</dbReference>
<dbReference type="PANTHER" id="PTHR11394:SF149">
    <property type="entry name" value="TASTE RECEPTOR TYPE 2 MEMBER 1"/>
    <property type="match status" value="1"/>
</dbReference>
<dbReference type="Pfam" id="PF05296">
    <property type="entry name" value="TAS2R"/>
    <property type="match status" value="1"/>
</dbReference>
<dbReference type="SUPFAM" id="SSF81321">
    <property type="entry name" value="Family A G protein-coupled receptor-like"/>
    <property type="match status" value="1"/>
</dbReference>
<proteinExistence type="inferred from homology"/>
<accession>Q8MJU6</accession>
<sequence length="299" mass="34150">MLESHLIIYFLLAVIQFLLGTFTNGIIVVVNGIDLIKHRKMAPLDLLLSCLAVSRIFLQLFIFYINVVVIFLIEFITCSASCAFLVFVNELELWLATWLGVFYCAKVASVLHPLFIWLKMRISKSVPWMILGSLLYVSMICIFHIKYTGFMVPYFLRNLFFQNATIQTEVKQAIQIFSFVAELLVPLLIFLVAVLLLIFSLGRHTRQMRNTVAGSRVPGRGAHISALLSILSFLILYISHYLIKTFLSSLKFHVKRFVFLFCILVIGTYPSGHSLILILGNPKLKQNTKKFLCHSKCCQ</sequence>